<organism>
    <name type="scientific">Pseudomonas aeruginosa (strain LESB58)</name>
    <dbReference type="NCBI Taxonomy" id="557722"/>
    <lineage>
        <taxon>Bacteria</taxon>
        <taxon>Pseudomonadati</taxon>
        <taxon>Pseudomonadota</taxon>
        <taxon>Gammaproteobacteria</taxon>
        <taxon>Pseudomonadales</taxon>
        <taxon>Pseudomonadaceae</taxon>
        <taxon>Pseudomonas</taxon>
    </lineage>
</organism>
<accession>B7V8H0</accession>
<evidence type="ECO:0000255" key="1">
    <source>
        <dbReference type="HAMAP-Rule" id="MF_00189"/>
    </source>
</evidence>
<reference key="1">
    <citation type="journal article" date="2009" name="Genome Res.">
        <title>Newly introduced genomic prophage islands are critical determinants of in vivo competitiveness in the Liverpool epidemic strain of Pseudomonas aeruginosa.</title>
        <authorList>
            <person name="Winstanley C."/>
            <person name="Langille M.G.I."/>
            <person name="Fothergill J.L."/>
            <person name="Kukavica-Ibrulj I."/>
            <person name="Paradis-Bleau C."/>
            <person name="Sanschagrin F."/>
            <person name="Thomson N.R."/>
            <person name="Winsor G.L."/>
            <person name="Quail M.A."/>
            <person name="Lennard N."/>
            <person name="Bignell A."/>
            <person name="Clarke L."/>
            <person name="Seeger K."/>
            <person name="Saunders D."/>
            <person name="Harris D."/>
            <person name="Parkhill J."/>
            <person name="Hancock R.E.W."/>
            <person name="Brinkman F.S.L."/>
            <person name="Levesque R.C."/>
        </authorList>
    </citation>
    <scope>NUCLEOTIDE SEQUENCE [LARGE SCALE GENOMIC DNA]</scope>
    <source>
        <strain>LESB58</strain>
    </source>
</reference>
<feature type="chain" id="PRO_1000118584" description="Inner membrane-spanning protein YciB">
    <location>
        <begin position="1"/>
        <end position="195"/>
    </location>
</feature>
<feature type="transmembrane region" description="Helical" evidence="1">
    <location>
        <begin position="34"/>
        <end position="54"/>
    </location>
</feature>
<feature type="transmembrane region" description="Helical" evidence="1">
    <location>
        <begin position="65"/>
        <end position="85"/>
    </location>
</feature>
<feature type="transmembrane region" description="Helical" evidence="1">
    <location>
        <begin position="88"/>
        <end position="108"/>
    </location>
</feature>
<feature type="transmembrane region" description="Helical" evidence="1">
    <location>
        <begin position="131"/>
        <end position="151"/>
    </location>
</feature>
<feature type="transmembrane region" description="Helical" evidence="1">
    <location>
        <begin position="160"/>
        <end position="180"/>
    </location>
</feature>
<sequence>MKQFIDFIPLILFFIVYKIDPQNVEFAGFNLSGIYGATATLILASVIVYGALWLKHRHLEKSQWFTLGACLVLGGLTLAFHEDTFLKWKAPLVNWLFALAFAGSHFIGDKPMIQRIMGHAIQLPQGLWVRLNIAWVVFFLVCGFANLYVVFTYPNFWVDFKVFGSLGMTLLFLIGQGLFLARHLHDADTGEKPKD</sequence>
<proteinExistence type="inferred from homology"/>
<dbReference type="EMBL" id="FM209186">
    <property type="protein sequence ID" value="CAW26594.1"/>
    <property type="molecule type" value="Genomic_DNA"/>
</dbReference>
<dbReference type="RefSeq" id="WP_003091488.1">
    <property type="nucleotide sequence ID" value="NC_011770.1"/>
</dbReference>
<dbReference type="KEGG" id="pag:PLES_18661"/>
<dbReference type="HOGENOM" id="CLU_089554_2_0_6"/>
<dbReference type="GO" id="GO:0005886">
    <property type="term" value="C:plasma membrane"/>
    <property type="evidence" value="ECO:0007669"/>
    <property type="project" value="UniProtKB-SubCell"/>
</dbReference>
<dbReference type="HAMAP" id="MF_00189">
    <property type="entry name" value="YciB"/>
    <property type="match status" value="1"/>
</dbReference>
<dbReference type="InterPro" id="IPR006008">
    <property type="entry name" value="YciB"/>
</dbReference>
<dbReference type="NCBIfam" id="TIGR00997">
    <property type="entry name" value="ispZ"/>
    <property type="match status" value="1"/>
</dbReference>
<dbReference type="NCBIfam" id="NF001325">
    <property type="entry name" value="PRK00259.1-3"/>
    <property type="match status" value="1"/>
</dbReference>
<dbReference type="NCBIfam" id="NF001327">
    <property type="entry name" value="PRK00259.1-5"/>
    <property type="match status" value="1"/>
</dbReference>
<dbReference type="PANTHER" id="PTHR36917:SF1">
    <property type="entry name" value="INNER MEMBRANE-SPANNING PROTEIN YCIB"/>
    <property type="match status" value="1"/>
</dbReference>
<dbReference type="PANTHER" id="PTHR36917">
    <property type="entry name" value="INTRACELLULAR SEPTATION PROTEIN A-RELATED"/>
    <property type="match status" value="1"/>
</dbReference>
<dbReference type="Pfam" id="PF04279">
    <property type="entry name" value="IspA"/>
    <property type="match status" value="1"/>
</dbReference>
<keyword id="KW-0997">Cell inner membrane</keyword>
<keyword id="KW-1003">Cell membrane</keyword>
<keyword id="KW-0472">Membrane</keyword>
<keyword id="KW-0812">Transmembrane</keyword>
<keyword id="KW-1133">Transmembrane helix</keyword>
<gene>
    <name evidence="1" type="primary">yciB</name>
    <name type="ordered locus">PLES_18661</name>
</gene>
<name>YCIB_PSEA8</name>
<protein>
    <recommendedName>
        <fullName evidence="1">Inner membrane-spanning protein YciB</fullName>
    </recommendedName>
</protein>
<comment type="function">
    <text evidence="1">Plays a role in cell envelope biogenesis, maintenance of cell envelope integrity and membrane homeostasis.</text>
</comment>
<comment type="subcellular location">
    <subcellularLocation>
        <location evidence="1">Cell inner membrane</location>
        <topology evidence="1">Multi-pass membrane protein</topology>
    </subcellularLocation>
</comment>
<comment type="similarity">
    <text evidence="1">Belongs to the YciB family.</text>
</comment>